<dbReference type="EMBL" id="X64772">
    <property type="protein sequence ID" value="CAA46020.1"/>
    <property type="molecule type" value="Genomic_DNA"/>
</dbReference>
<dbReference type="PIR" id="S20484">
    <property type="entry name" value="S20484"/>
</dbReference>
<reference key="1">
    <citation type="journal article" date="1992" name="Mol. Gen. Genet.">
        <title>Characterization of an Azospirillum brasilense Sp7 gene homologous to Alcaligenes eutrophus phbB and to Rhizobium meliloti nodG.</title>
        <authorList>
            <person name="Vieille C."/>
            <person name="Elmerich C."/>
        </authorList>
    </citation>
    <scope>NUCLEOTIDE SEQUENCE [GENOMIC DNA]</scope>
    <source>
        <strain>ATCC 29145 / DSM 1690 / IMET 11303 / Sp7</strain>
    </source>
</reference>
<feature type="chain" id="PRO_0000066324" description="Uncharacterized 17.8 kDa protein in nodG 5'region">
    <location>
        <begin position="1"/>
        <end position="169"/>
    </location>
</feature>
<organism>
    <name type="scientific">Azospirillum brasilense</name>
    <dbReference type="NCBI Taxonomy" id="192"/>
    <lineage>
        <taxon>Bacteria</taxon>
        <taxon>Pseudomonadati</taxon>
        <taxon>Pseudomonadota</taxon>
        <taxon>Alphaproteobacteria</taxon>
        <taxon>Rhodospirillales</taxon>
        <taxon>Azospirillaceae</taxon>
        <taxon>Azospirillum</taxon>
    </lineage>
</organism>
<sequence length="169" mass="17854">MALPWLFNSSPRAGGPSACACLWPRRYPAAGLRTVPVRVSIQPDGDVLVALPRAAVEDGRFDAAAARRLTAQMRRLVGRVTTTNPLWGIDALQALGEAVTALAGLCSGGVLLWNGFEQMTTGRWAHSAATLALLAAPAALAKLRPWLLGAVAPKLFPLALKAGERIVRI</sequence>
<accession>Q00644</accession>
<proteinExistence type="predicted"/>
<protein>
    <recommendedName>
        <fullName>Uncharacterized 17.8 kDa protein in nodG 5'region</fullName>
    </recommendedName>
    <alternativeName>
        <fullName>ORF 2</fullName>
    </alternativeName>
</protein>
<name>YNG2_AZOBR</name>